<organism>
    <name type="scientific">Emericella nidulans (strain FGSC A4 / ATCC 38163 / CBS 112.46 / NRRL 194 / M139)</name>
    <name type="common">Aspergillus nidulans</name>
    <dbReference type="NCBI Taxonomy" id="227321"/>
    <lineage>
        <taxon>Eukaryota</taxon>
        <taxon>Fungi</taxon>
        <taxon>Dikarya</taxon>
        <taxon>Ascomycota</taxon>
        <taxon>Pezizomycotina</taxon>
        <taxon>Eurotiomycetes</taxon>
        <taxon>Eurotiomycetidae</taxon>
        <taxon>Eurotiales</taxon>
        <taxon>Aspergillaceae</taxon>
        <taxon>Aspergillus</taxon>
        <taxon>Aspergillus subgen. Nidulantes</taxon>
    </lineage>
</organism>
<comment type="function">
    <text evidence="1">Required for pre-18S rRNA processing. May bind microtubules (By similarity).</text>
</comment>
<comment type="subcellular location">
    <subcellularLocation>
        <location evidence="1">Nucleus</location>
        <location evidence="1">Nucleolus</location>
    </subcellularLocation>
</comment>
<comment type="similarity">
    <text evidence="4">Belongs to the NOP5/NOP56 family.</text>
</comment>
<keyword id="KW-0539">Nucleus</keyword>
<keyword id="KW-1185">Reference proteome</keyword>
<keyword id="KW-0687">Ribonucleoprotein</keyword>
<keyword id="KW-0690">Ribosome biogenesis</keyword>
<keyword id="KW-0698">rRNA processing</keyword>
<proteinExistence type="inferred from homology"/>
<dbReference type="EMBL" id="AACD01000051">
    <property type="protein sequence ID" value="EAA63738.1"/>
    <property type="molecule type" value="Genomic_DNA"/>
</dbReference>
<dbReference type="EMBL" id="BN001306">
    <property type="protein sequence ID" value="CBF83273.1"/>
    <property type="molecule type" value="Genomic_DNA"/>
</dbReference>
<dbReference type="RefSeq" id="XP_660771.1">
    <property type="nucleotide sequence ID" value="XM_655679.1"/>
</dbReference>
<dbReference type="SMR" id="Q5B8G3"/>
<dbReference type="FunCoup" id="Q5B8G3">
    <property type="interactions" value="1553"/>
</dbReference>
<dbReference type="STRING" id="227321.Q5B8G3"/>
<dbReference type="EnsemblFungi" id="CBF83273">
    <property type="protein sequence ID" value="CBF83273"/>
    <property type="gene ID" value="ANIA_03167"/>
</dbReference>
<dbReference type="KEGG" id="ani:ANIA_03167"/>
<dbReference type="VEuPathDB" id="FungiDB:AN3167"/>
<dbReference type="eggNOG" id="KOG2572">
    <property type="taxonomic scope" value="Eukaryota"/>
</dbReference>
<dbReference type="HOGENOM" id="CLU_015495_5_0_1"/>
<dbReference type="InParanoid" id="Q5B8G3"/>
<dbReference type="OMA" id="MGMRSNW"/>
<dbReference type="OrthoDB" id="6780543at2759"/>
<dbReference type="Proteomes" id="UP000000560">
    <property type="component" value="Chromosome VI"/>
</dbReference>
<dbReference type="GO" id="GO:0031428">
    <property type="term" value="C:box C/D methylation guide snoRNP complex"/>
    <property type="evidence" value="ECO:0000318"/>
    <property type="project" value="GO_Central"/>
</dbReference>
<dbReference type="GO" id="GO:0005730">
    <property type="term" value="C:nucleolus"/>
    <property type="evidence" value="ECO:0007669"/>
    <property type="project" value="UniProtKB-SubCell"/>
</dbReference>
<dbReference type="GO" id="GO:0032040">
    <property type="term" value="C:small-subunit processome"/>
    <property type="evidence" value="ECO:0000318"/>
    <property type="project" value="GO_Central"/>
</dbReference>
<dbReference type="GO" id="GO:0030515">
    <property type="term" value="F:snoRNA binding"/>
    <property type="evidence" value="ECO:0000318"/>
    <property type="project" value="GO_Central"/>
</dbReference>
<dbReference type="GO" id="GO:0017069">
    <property type="term" value="F:snRNA binding"/>
    <property type="evidence" value="ECO:0007669"/>
    <property type="project" value="EnsemblFungi"/>
</dbReference>
<dbReference type="GO" id="GO:0000494">
    <property type="term" value="P:box C/D sno(s)RNA 3'-end processing"/>
    <property type="evidence" value="ECO:0007669"/>
    <property type="project" value="EnsemblFungi"/>
</dbReference>
<dbReference type="GO" id="GO:0000480">
    <property type="term" value="P:endonucleolytic cleavage in 5'-ETS of tricistronic rRNA transcript (SSU-rRNA, 5.8S rRNA, LSU-rRNA)"/>
    <property type="evidence" value="ECO:0007669"/>
    <property type="project" value="EnsemblFungi"/>
</dbReference>
<dbReference type="GO" id="GO:0000447">
    <property type="term" value="P:endonucleolytic cleavage in ITS1 to separate SSU-rRNA from 5.8S rRNA and LSU-rRNA from tricistronic rRNA transcript (SSU-rRNA, 5.8S rRNA, LSU-rRNA)"/>
    <property type="evidence" value="ECO:0007669"/>
    <property type="project" value="EnsemblFungi"/>
</dbReference>
<dbReference type="GO" id="GO:0000472">
    <property type="term" value="P:endonucleolytic cleavage to generate mature 5'-end of SSU-rRNA from (SSU-rRNA, 5.8S rRNA, LSU-rRNA)"/>
    <property type="evidence" value="ECO:0007669"/>
    <property type="project" value="EnsemblFungi"/>
</dbReference>
<dbReference type="GO" id="GO:1902570">
    <property type="term" value="P:protein localization to nucleolus"/>
    <property type="evidence" value="ECO:0007669"/>
    <property type="project" value="EnsemblFungi"/>
</dbReference>
<dbReference type="GO" id="GO:0000452">
    <property type="term" value="P:snoRNA guided rRNA 2'-O-methylation"/>
    <property type="evidence" value="ECO:0007669"/>
    <property type="project" value="EnsemblFungi"/>
</dbReference>
<dbReference type="FunFam" id="1.10.246.90:FF:000003">
    <property type="entry name" value="Nucleolar protein 58"/>
    <property type="match status" value="1"/>
</dbReference>
<dbReference type="FunFam" id="1.10.287.4070:FF:000001">
    <property type="entry name" value="Probable Nucleolar protein 58"/>
    <property type="match status" value="1"/>
</dbReference>
<dbReference type="Gene3D" id="1.10.287.4070">
    <property type="match status" value="1"/>
</dbReference>
<dbReference type="Gene3D" id="1.10.246.90">
    <property type="entry name" value="Nop domain"/>
    <property type="match status" value="1"/>
</dbReference>
<dbReference type="InterPro" id="IPR045056">
    <property type="entry name" value="Nop56/Nop58"/>
</dbReference>
<dbReference type="InterPro" id="IPR012974">
    <property type="entry name" value="NOP58/56_N"/>
</dbReference>
<dbReference type="InterPro" id="IPR042239">
    <property type="entry name" value="Nop_C"/>
</dbReference>
<dbReference type="InterPro" id="IPR002687">
    <property type="entry name" value="Nop_dom"/>
</dbReference>
<dbReference type="InterPro" id="IPR036070">
    <property type="entry name" value="Nop_dom_sf"/>
</dbReference>
<dbReference type="InterPro" id="IPR012976">
    <property type="entry name" value="NOSIC"/>
</dbReference>
<dbReference type="PANTHER" id="PTHR10894">
    <property type="entry name" value="NUCLEOLAR PROTEIN 5 NUCLEOLAR PROTEIN NOP5 NOP58"/>
    <property type="match status" value="1"/>
</dbReference>
<dbReference type="PANTHER" id="PTHR10894:SF1">
    <property type="entry name" value="NUCLEOLAR PROTEIN 58"/>
    <property type="match status" value="1"/>
</dbReference>
<dbReference type="Pfam" id="PF01798">
    <property type="entry name" value="Nop"/>
    <property type="match status" value="1"/>
</dbReference>
<dbReference type="Pfam" id="PF08156">
    <property type="entry name" value="NOP5NT"/>
    <property type="match status" value="1"/>
</dbReference>
<dbReference type="SMART" id="SM00931">
    <property type="entry name" value="NOSIC"/>
    <property type="match status" value="1"/>
</dbReference>
<dbReference type="SUPFAM" id="SSF89124">
    <property type="entry name" value="Nop domain"/>
    <property type="match status" value="1"/>
</dbReference>
<dbReference type="PROSITE" id="PS51358">
    <property type="entry name" value="NOP"/>
    <property type="match status" value="1"/>
</dbReference>
<sequence>MTLFILTETSAGYALLKAKDKKLLKRDDLATEASTAEGVSNLLKLKSFQKFDSATAALEEVASVVEGKVTPRLASLLDEIKDEKKVSLAVADPKLGNAIGKLPGLDISLIADSTTADIYRAIREHLPTLIPGLLPQDMSTMSLGLSHSLARHKLKFSPDKIDTMIVQAIGLLDDLDKELNNYAMRVKEWYGWHFPELAKILNDNIAYSRLVLKMGMRSNFENADLAEILPEEIEAAVKAAADRSMGTEISEDDLENIQALAEQVVGFSEYRSQLAGYITARMNAIAPNLTALVGDLVGARLIAHAGSLTNLSKSPASTLQILGAEKALFRALKTKHDTPKYGLIYHASLIGQATGKNKGKMARVLAAKASLGLRVDALAEWDDDVTEEDKAALGTEARFNLERKLAALEGKPLKPRGVAIGPDGASAQPGKFNINEARKYNPDADAVDQDKATPSKKMLVQEVQDEEMADADSDEEPAANGVDSDSSDEETSKKSKKSKGSEIEKLAEKAGLSVKRYKRKLERGEIQFDAAGNPSAISKKDIKKAKKEAKKEAKKASKGDDKEKKRKRSDETEDTDGKKKKKKRDD</sequence>
<gene>
    <name type="primary">nop58</name>
    <name type="ORF">AN3167</name>
</gene>
<name>NOP58_EMENI</name>
<feature type="chain" id="PRO_0000350984" description="Nucleolar protein 58">
    <location>
        <begin position="1"/>
        <end position="586"/>
    </location>
</feature>
<feature type="domain" description="Nop" evidence="2">
    <location>
        <begin position="285"/>
        <end position="410"/>
    </location>
</feature>
<feature type="region of interest" description="Disordered" evidence="3">
    <location>
        <begin position="464"/>
        <end position="586"/>
    </location>
</feature>
<feature type="compositionally biased region" description="Acidic residues" evidence="3">
    <location>
        <begin position="464"/>
        <end position="477"/>
    </location>
</feature>
<feature type="compositionally biased region" description="Basic and acidic residues" evidence="3">
    <location>
        <begin position="499"/>
        <end position="508"/>
    </location>
</feature>
<feature type="compositionally biased region" description="Basic and acidic residues" evidence="3">
    <location>
        <begin position="549"/>
        <end position="563"/>
    </location>
</feature>
<evidence type="ECO:0000250" key="1"/>
<evidence type="ECO:0000255" key="2">
    <source>
        <dbReference type="PROSITE-ProRule" id="PRU00690"/>
    </source>
</evidence>
<evidence type="ECO:0000256" key="3">
    <source>
        <dbReference type="SAM" id="MobiDB-lite"/>
    </source>
</evidence>
<evidence type="ECO:0000305" key="4"/>
<protein>
    <recommendedName>
        <fullName>Nucleolar protein 58</fullName>
    </recommendedName>
</protein>
<reference key="1">
    <citation type="journal article" date="2005" name="Nature">
        <title>Sequencing of Aspergillus nidulans and comparative analysis with A. fumigatus and A. oryzae.</title>
        <authorList>
            <person name="Galagan J.E."/>
            <person name="Calvo S.E."/>
            <person name="Cuomo C."/>
            <person name="Ma L.-J."/>
            <person name="Wortman J.R."/>
            <person name="Batzoglou S."/>
            <person name="Lee S.-I."/>
            <person name="Bastuerkmen M."/>
            <person name="Spevak C.C."/>
            <person name="Clutterbuck J."/>
            <person name="Kapitonov V."/>
            <person name="Jurka J."/>
            <person name="Scazzocchio C."/>
            <person name="Farman M.L."/>
            <person name="Butler J."/>
            <person name="Purcell S."/>
            <person name="Harris S."/>
            <person name="Braus G.H."/>
            <person name="Draht O."/>
            <person name="Busch S."/>
            <person name="D'Enfert C."/>
            <person name="Bouchier C."/>
            <person name="Goldman G.H."/>
            <person name="Bell-Pedersen D."/>
            <person name="Griffiths-Jones S."/>
            <person name="Doonan J.H."/>
            <person name="Yu J."/>
            <person name="Vienken K."/>
            <person name="Pain A."/>
            <person name="Freitag M."/>
            <person name="Selker E.U."/>
            <person name="Archer D.B."/>
            <person name="Penalva M.A."/>
            <person name="Oakley B.R."/>
            <person name="Momany M."/>
            <person name="Tanaka T."/>
            <person name="Kumagai T."/>
            <person name="Asai K."/>
            <person name="Machida M."/>
            <person name="Nierman W.C."/>
            <person name="Denning D.W."/>
            <person name="Caddick M.X."/>
            <person name="Hynes M."/>
            <person name="Paoletti M."/>
            <person name="Fischer R."/>
            <person name="Miller B.L."/>
            <person name="Dyer P.S."/>
            <person name="Sachs M.S."/>
            <person name="Osmani S.A."/>
            <person name="Birren B.W."/>
        </authorList>
    </citation>
    <scope>NUCLEOTIDE SEQUENCE [LARGE SCALE GENOMIC DNA]</scope>
    <source>
        <strain>FGSC A4 / ATCC 38163 / CBS 112.46 / NRRL 194 / M139</strain>
    </source>
</reference>
<reference key="2">
    <citation type="journal article" date="2009" name="Fungal Genet. Biol.">
        <title>The 2008 update of the Aspergillus nidulans genome annotation: a community effort.</title>
        <authorList>
            <person name="Wortman J.R."/>
            <person name="Gilsenan J.M."/>
            <person name="Joardar V."/>
            <person name="Deegan J."/>
            <person name="Clutterbuck J."/>
            <person name="Andersen M.R."/>
            <person name="Archer D."/>
            <person name="Bencina M."/>
            <person name="Braus G."/>
            <person name="Coutinho P."/>
            <person name="von Dohren H."/>
            <person name="Doonan J."/>
            <person name="Driessen A.J."/>
            <person name="Durek P."/>
            <person name="Espeso E."/>
            <person name="Fekete E."/>
            <person name="Flipphi M."/>
            <person name="Estrada C.G."/>
            <person name="Geysens S."/>
            <person name="Goldman G."/>
            <person name="de Groot P.W."/>
            <person name="Hansen K."/>
            <person name="Harris S.D."/>
            <person name="Heinekamp T."/>
            <person name="Helmstaedt K."/>
            <person name="Henrissat B."/>
            <person name="Hofmann G."/>
            <person name="Homan T."/>
            <person name="Horio T."/>
            <person name="Horiuchi H."/>
            <person name="James S."/>
            <person name="Jones M."/>
            <person name="Karaffa L."/>
            <person name="Karanyi Z."/>
            <person name="Kato M."/>
            <person name="Keller N."/>
            <person name="Kelly D.E."/>
            <person name="Kiel J.A."/>
            <person name="Kim J.M."/>
            <person name="van der Klei I.J."/>
            <person name="Klis F.M."/>
            <person name="Kovalchuk A."/>
            <person name="Krasevec N."/>
            <person name="Kubicek C.P."/>
            <person name="Liu B."/>
            <person name="Maccabe A."/>
            <person name="Meyer V."/>
            <person name="Mirabito P."/>
            <person name="Miskei M."/>
            <person name="Mos M."/>
            <person name="Mullins J."/>
            <person name="Nelson D.R."/>
            <person name="Nielsen J."/>
            <person name="Oakley B.R."/>
            <person name="Osmani S.A."/>
            <person name="Pakula T."/>
            <person name="Paszewski A."/>
            <person name="Paulsen I."/>
            <person name="Pilsyk S."/>
            <person name="Pocsi I."/>
            <person name="Punt P.J."/>
            <person name="Ram A.F."/>
            <person name="Ren Q."/>
            <person name="Robellet X."/>
            <person name="Robson G."/>
            <person name="Seiboth B."/>
            <person name="van Solingen P."/>
            <person name="Specht T."/>
            <person name="Sun J."/>
            <person name="Taheri-Talesh N."/>
            <person name="Takeshita N."/>
            <person name="Ussery D."/>
            <person name="vanKuyk P.A."/>
            <person name="Visser H."/>
            <person name="van de Vondervoort P.J."/>
            <person name="de Vries R.P."/>
            <person name="Walton J."/>
            <person name="Xiang X."/>
            <person name="Xiong Y."/>
            <person name="Zeng A.P."/>
            <person name="Brandt B.W."/>
            <person name="Cornell M.J."/>
            <person name="van den Hondel C.A."/>
            <person name="Visser J."/>
            <person name="Oliver S.G."/>
            <person name="Turner G."/>
        </authorList>
    </citation>
    <scope>GENOME REANNOTATION</scope>
    <source>
        <strain>FGSC A4 / ATCC 38163 / CBS 112.46 / NRRL 194 / M139</strain>
    </source>
</reference>
<accession>Q5B8G3</accession>
<accession>C8VIE7</accession>